<accession>Q9K0U9</accession>
<feature type="signal peptide" evidence="1">
    <location>
        <begin position="1"/>
        <end position="24"/>
    </location>
</feature>
<feature type="chain" id="PRO_0000349889" description="Transferrin-binding protein A">
    <location>
        <begin position="25"/>
        <end position="915"/>
    </location>
</feature>
<feature type="topological domain" description="Periplasmic" evidence="6">
    <location>
        <begin position="25"/>
        <end position="187"/>
    </location>
</feature>
<feature type="transmembrane region" description="Beta stranded" evidence="6">
    <location>
        <begin position="188"/>
        <end position="197"/>
    </location>
</feature>
<feature type="topological domain" description="Extracellular" evidence="6">
    <location>
        <begin position="198"/>
        <end position="203"/>
    </location>
</feature>
<feature type="transmembrane region" description="Beta stranded" evidence="6">
    <location>
        <begin position="204"/>
        <end position="213"/>
    </location>
</feature>
<feature type="topological domain" description="Periplasmic" evidence="6">
    <location>
        <begin position="214"/>
        <end position="215"/>
    </location>
</feature>
<feature type="transmembrane region" description="Beta stranded" evidence="6">
    <location>
        <begin position="216"/>
        <end position="225"/>
    </location>
</feature>
<feature type="topological domain" description="Extracellular" evidence="6">
    <location>
        <begin position="226"/>
        <end position="309"/>
    </location>
</feature>
<feature type="transmembrane region" description="Beta stranded" evidence="6">
    <location>
        <begin position="310"/>
        <end position="319"/>
    </location>
</feature>
<feature type="topological domain" description="Periplasmic" evidence="6">
    <location>
        <begin position="320"/>
        <end position="324"/>
    </location>
</feature>
<feature type="transmembrane region" description="Beta stranded" evidence="6">
    <location>
        <begin position="325"/>
        <end position="334"/>
    </location>
</feature>
<feature type="topological domain" description="Extracellular" evidence="6">
    <location>
        <begin position="335"/>
        <end position="406"/>
    </location>
</feature>
<feature type="transmembrane region" description="Beta stranded" evidence="6">
    <location>
        <begin position="407"/>
        <end position="415"/>
    </location>
</feature>
<feature type="topological domain" description="Periplasmic" evidence="6">
    <location>
        <begin position="416"/>
        <end position="423"/>
    </location>
</feature>
<feature type="transmembrane region" description="Beta stranded" evidence="6">
    <location>
        <begin position="424"/>
        <end position="433"/>
    </location>
</feature>
<feature type="topological domain" description="Extracellular" evidence="6">
    <location>
        <begin position="434"/>
        <end position="478"/>
    </location>
</feature>
<feature type="transmembrane region" description="Beta stranded" evidence="6">
    <location>
        <begin position="479"/>
        <end position="488"/>
    </location>
</feature>
<feature type="topological domain" description="Periplasmic" evidence="6">
    <location>
        <begin position="489"/>
        <end position="494"/>
    </location>
</feature>
<feature type="transmembrane region" description="Beta stranded" evidence="6">
    <location>
        <begin position="495"/>
        <end position="504"/>
    </location>
</feature>
<feature type="topological domain" description="Extracellular" evidence="6">
    <location>
        <begin position="505"/>
        <end position="583"/>
    </location>
</feature>
<feature type="transmembrane region" description="Beta stranded" evidence="6">
    <location>
        <begin position="584"/>
        <end position="592"/>
    </location>
</feature>
<feature type="topological domain" description="Periplasmic" evidence="6">
    <location>
        <begin position="593"/>
        <end position="594"/>
    </location>
</feature>
<feature type="transmembrane region" description="Beta stranded" evidence="6">
    <location>
        <begin position="595"/>
        <end position="603"/>
    </location>
</feature>
<feature type="topological domain" description="Extracellular" evidence="6">
    <location>
        <begin position="604"/>
        <end position="623"/>
    </location>
</feature>
<feature type="transmembrane region" description="Beta stranded" evidence="6">
    <location>
        <begin position="624"/>
        <end position="633"/>
    </location>
</feature>
<feature type="topological domain" description="Periplasmic" evidence="6">
    <location>
        <begin position="634"/>
        <end position="637"/>
    </location>
</feature>
<feature type="transmembrane region" description="Beta stranded" evidence="6">
    <location>
        <begin position="638"/>
        <end position="647"/>
    </location>
</feature>
<feature type="topological domain" description="Extracellular" evidence="6">
    <location>
        <begin position="648"/>
        <end position="675"/>
    </location>
</feature>
<feature type="transmembrane region" description="Beta stranded" evidence="6">
    <location>
        <begin position="676"/>
        <end position="685"/>
    </location>
</feature>
<feature type="topological domain" description="Periplasmic" evidence="6">
    <location>
        <begin position="686"/>
        <end position="689"/>
    </location>
</feature>
<feature type="transmembrane region" description="Beta stranded" evidence="6">
    <location>
        <begin position="690"/>
        <end position="699"/>
    </location>
</feature>
<feature type="topological domain" description="Extracellular" evidence="6">
    <location>
        <begin position="700"/>
        <end position="733"/>
    </location>
</feature>
<feature type="transmembrane region" description="Beta stranded" evidence="6">
    <location>
        <begin position="734"/>
        <end position="743"/>
    </location>
</feature>
<feature type="topological domain" description="Periplasmic" evidence="6">
    <location>
        <begin position="744"/>
        <end position="755"/>
    </location>
</feature>
<feature type="transmembrane region" description="Beta stranded" evidence="6">
    <location>
        <begin position="756"/>
        <end position="765"/>
    </location>
</feature>
<feature type="topological domain" description="Extracellular" evidence="6">
    <location>
        <begin position="766"/>
        <end position="790"/>
    </location>
</feature>
<feature type="transmembrane region" description="Beta stranded" evidence="6">
    <location>
        <begin position="791"/>
        <end position="799"/>
    </location>
</feature>
<feature type="topological domain" description="Periplasmic" evidence="6">
    <location>
        <begin position="800"/>
        <end position="802"/>
    </location>
</feature>
<feature type="transmembrane region" description="Beta stranded" evidence="6">
    <location>
        <begin position="803"/>
        <end position="811"/>
    </location>
</feature>
<feature type="topological domain" description="Extracellular" evidence="6">
    <location>
        <begin position="812"/>
        <end position="845"/>
    </location>
</feature>
<feature type="transmembrane region" description="Beta stranded" evidence="6">
    <location>
        <begin position="846"/>
        <end position="855"/>
    </location>
</feature>
<feature type="topological domain" description="Periplasmic" evidence="6">
    <location>
        <begin position="856"/>
        <end position="860"/>
    </location>
</feature>
<feature type="transmembrane region" description="Beta stranded" evidence="6">
    <location>
        <begin position="861"/>
        <end position="870"/>
    </location>
</feature>
<feature type="topological domain" description="Extracellular" evidence="6">
    <location>
        <begin position="871"/>
        <end position="905"/>
    </location>
</feature>
<feature type="transmembrane region" description="Beta stranded" evidence="6">
    <location>
        <begin position="906"/>
        <end position="915"/>
    </location>
</feature>
<feature type="domain" description="TBDR plug" evidence="2">
    <location>
        <begin position="51"/>
        <end position="176"/>
    </location>
</feature>
<feature type="domain" description="TBDR beta-barrel" evidence="2">
    <location>
        <begin position="187"/>
        <end position="915"/>
    </location>
</feature>
<feature type="region of interest" description="Plug loop, interacts with transferrin" evidence="6">
    <location>
        <begin position="121"/>
        <end position="139"/>
    </location>
</feature>
<feature type="region of interest" description="L3 helix finger, interacts with transferrin" evidence="6">
    <location>
        <begin position="351"/>
        <end position="361"/>
    </location>
</feature>
<feature type="region of interest" description="Disordered" evidence="3">
    <location>
        <begin position="523"/>
        <end position="542"/>
    </location>
</feature>
<feature type="short sequence motif" description="TonB box">
    <location>
        <begin position="38"/>
        <end position="45"/>
    </location>
</feature>
<feature type="short sequence motif" description="TonB C-terminal box">
    <location>
        <begin position="898"/>
        <end position="915"/>
    </location>
</feature>
<feature type="mutagenesis site" description="Nearly complete loss of binding to human transferrin (TF)." evidence="6">
    <original>D</original>
    <variation>A</variation>
    <location>
        <position position="251"/>
    </location>
</feature>
<feature type="mutagenesis site" description="No longer binds TF, changes surface protein conformation." evidence="6">
    <location>
        <begin position="351"/>
        <end position="361"/>
    </location>
</feature>
<feature type="mutagenesis site" description="Wild-type TF binding." evidence="6">
    <original>K</original>
    <variation>A</variation>
    <location>
        <position position="358"/>
    </location>
</feature>
<feature type="mutagenesis site" description="Binds about 50% TF." evidence="6">
    <original>K</original>
    <variation>A</variation>
    <location>
        <position position="467"/>
    </location>
</feature>
<feature type="mutagenesis site" description="Binds about 50% TF." evidence="6">
    <original>D</original>
    <variation>A</variation>
    <location>
        <position position="722"/>
    </location>
</feature>
<feature type="mutagenesis site" description="Binds about 75% TF." evidence="6">
    <original>R</original>
    <variation>A</variation>
    <location>
        <position position="825"/>
    </location>
</feature>
<feature type="turn" evidence="14">
    <location>
        <begin position="56"/>
        <end position="59"/>
    </location>
</feature>
<feature type="strand" evidence="14">
    <location>
        <begin position="60"/>
        <end position="64"/>
    </location>
</feature>
<feature type="helix" evidence="14">
    <location>
        <begin position="65"/>
        <end position="71"/>
    </location>
</feature>
<feature type="helix" evidence="14">
    <location>
        <begin position="76"/>
        <end position="79"/>
    </location>
</feature>
<feature type="turn" evidence="14">
    <location>
        <begin position="80"/>
        <end position="82"/>
    </location>
</feature>
<feature type="strand" evidence="14">
    <location>
        <begin position="86"/>
        <end position="90"/>
    </location>
</feature>
<feature type="strand" evidence="14">
    <location>
        <begin position="92"/>
        <end position="94"/>
    </location>
</feature>
<feature type="strand" evidence="14">
    <location>
        <begin position="96"/>
        <end position="101"/>
    </location>
</feature>
<feature type="helix" evidence="14">
    <location>
        <begin position="106"/>
        <end position="108"/>
    </location>
</feature>
<feature type="strand" evidence="14">
    <location>
        <begin position="109"/>
        <end position="113"/>
    </location>
</feature>
<feature type="helix" evidence="14">
    <location>
        <begin position="145"/>
        <end position="147"/>
    </location>
</feature>
<feature type="strand" evidence="14">
    <location>
        <begin position="148"/>
        <end position="156"/>
    </location>
</feature>
<feature type="helix" evidence="14">
    <location>
        <begin position="159"/>
        <end position="162"/>
    </location>
</feature>
<feature type="strand" evidence="14">
    <location>
        <begin position="167"/>
        <end position="175"/>
    </location>
</feature>
<feature type="helix" evidence="14">
    <location>
        <begin position="178"/>
        <end position="180"/>
    </location>
</feature>
<feature type="strand" evidence="14">
    <location>
        <begin position="187"/>
        <end position="197"/>
    </location>
</feature>
<feature type="helix" evidence="14">
    <location>
        <begin position="198"/>
        <end position="200"/>
    </location>
</feature>
<feature type="strand" evidence="14">
    <location>
        <begin position="202"/>
        <end position="213"/>
    </location>
</feature>
<feature type="strand" evidence="14">
    <location>
        <begin position="216"/>
        <end position="228"/>
    </location>
</feature>
<feature type="helix" evidence="13">
    <location>
        <begin position="234"/>
        <end position="236"/>
    </location>
</feature>
<feature type="strand" evidence="14">
    <location>
        <begin position="239"/>
        <end position="243"/>
    </location>
</feature>
<feature type="strand" evidence="14">
    <location>
        <begin position="246"/>
        <end position="250"/>
    </location>
</feature>
<feature type="strand" evidence="14">
    <location>
        <begin position="257"/>
        <end position="260"/>
    </location>
</feature>
<feature type="helix" evidence="14">
    <location>
        <begin position="261"/>
        <end position="263"/>
    </location>
</feature>
<feature type="strand" evidence="13">
    <location>
        <begin position="266"/>
        <end position="268"/>
    </location>
</feature>
<feature type="helix" evidence="14">
    <location>
        <begin position="269"/>
        <end position="272"/>
    </location>
</feature>
<feature type="strand" evidence="14">
    <location>
        <begin position="280"/>
        <end position="284"/>
    </location>
</feature>
<feature type="strand" evidence="14">
    <location>
        <begin position="287"/>
        <end position="290"/>
    </location>
</feature>
<feature type="turn" evidence="14">
    <location>
        <begin position="291"/>
        <end position="293"/>
    </location>
</feature>
<feature type="strand" evidence="14">
    <location>
        <begin position="296"/>
        <end position="298"/>
    </location>
</feature>
<feature type="strand" evidence="14">
    <location>
        <begin position="305"/>
        <end position="314"/>
    </location>
</feature>
<feature type="strand" evidence="14">
    <location>
        <begin position="317"/>
        <end position="319"/>
    </location>
</feature>
<feature type="turn" evidence="13">
    <location>
        <begin position="321"/>
        <end position="324"/>
    </location>
</feature>
<feature type="strand" evidence="14">
    <location>
        <begin position="325"/>
        <end position="341"/>
    </location>
</feature>
<feature type="helix" evidence="14">
    <location>
        <begin position="351"/>
        <end position="361"/>
    </location>
</feature>
<feature type="turn" evidence="14">
    <location>
        <begin position="365"/>
        <end position="368"/>
    </location>
</feature>
<feature type="helix" evidence="13">
    <location>
        <begin position="375"/>
        <end position="378"/>
    </location>
</feature>
<feature type="strand" evidence="14">
    <location>
        <begin position="380"/>
        <end position="382"/>
    </location>
</feature>
<feature type="strand" evidence="13">
    <location>
        <begin position="384"/>
        <end position="386"/>
    </location>
</feature>
<feature type="strand" evidence="14">
    <location>
        <begin position="388"/>
        <end position="390"/>
    </location>
</feature>
<feature type="strand" evidence="14">
    <location>
        <begin position="393"/>
        <end position="415"/>
    </location>
</feature>
<feature type="strand" evidence="13">
    <location>
        <begin position="417"/>
        <end position="419"/>
    </location>
</feature>
<feature type="strand" evidence="14">
    <location>
        <begin position="424"/>
        <end position="450"/>
    </location>
</feature>
<feature type="strand" evidence="14">
    <location>
        <begin position="465"/>
        <end position="488"/>
    </location>
</feature>
<feature type="strand" evidence="14">
    <location>
        <begin position="494"/>
        <end position="527"/>
    </location>
</feature>
<feature type="strand" evidence="14">
    <location>
        <begin position="533"/>
        <end position="535"/>
    </location>
</feature>
<feature type="strand" evidence="14">
    <location>
        <begin position="547"/>
        <end position="560"/>
    </location>
</feature>
<feature type="strand" evidence="14">
    <location>
        <begin position="563"/>
        <end position="566"/>
    </location>
</feature>
<feature type="strand" evidence="14">
    <location>
        <begin position="575"/>
        <end position="592"/>
    </location>
</feature>
<feature type="turn" evidence="14">
    <location>
        <begin position="593"/>
        <end position="595"/>
    </location>
</feature>
<feature type="strand" evidence="14">
    <location>
        <begin position="596"/>
        <end position="610"/>
    </location>
</feature>
<feature type="strand" evidence="13">
    <location>
        <begin position="612"/>
        <end position="614"/>
    </location>
</feature>
<feature type="strand" evidence="14">
    <location>
        <begin position="620"/>
        <end position="632"/>
    </location>
</feature>
<feature type="strand" evidence="14">
    <location>
        <begin position="635"/>
        <end position="649"/>
    </location>
</feature>
<feature type="helix" evidence="14">
    <location>
        <begin position="653"/>
        <end position="657"/>
    </location>
</feature>
<feature type="strand" evidence="14">
    <location>
        <begin position="673"/>
        <end position="686"/>
    </location>
</feature>
<feature type="strand" evidence="14">
    <location>
        <begin position="689"/>
        <end position="742"/>
    </location>
</feature>
<feature type="strand" evidence="14">
    <location>
        <begin position="756"/>
        <end position="771"/>
    </location>
</feature>
<feature type="strand" evidence="14">
    <location>
        <begin position="775"/>
        <end position="779"/>
    </location>
</feature>
<feature type="strand" evidence="14">
    <location>
        <begin position="790"/>
        <end position="798"/>
    </location>
</feature>
<feature type="strand" evidence="14">
    <location>
        <begin position="802"/>
        <end position="813"/>
    </location>
</feature>
<feature type="helix" evidence="14">
    <location>
        <begin position="818"/>
        <end position="821"/>
    </location>
</feature>
<feature type="strand" evidence="14">
    <location>
        <begin position="822"/>
        <end position="826"/>
    </location>
</feature>
<feature type="strand" evidence="14">
    <location>
        <begin position="828"/>
        <end position="830"/>
    </location>
</feature>
<feature type="strand" evidence="14">
    <location>
        <begin position="832"/>
        <end position="837"/>
    </location>
</feature>
<feature type="strand" evidence="14">
    <location>
        <begin position="845"/>
        <end position="856"/>
    </location>
</feature>
<feature type="strand" evidence="14">
    <location>
        <begin position="859"/>
        <end position="870"/>
    </location>
</feature>
<feature type="helix" evidence="14">
    <location>
        <begin position="877"/>
        <end position="880"/>
    </location>
</feature>
<feature type="helix" evidence="14">
    <location>
        <begin position="881"/>
        <end position="883"/>
    </location>
</feature>
<feature type="helix" evidence="14">
    <location>
        <begin position="897"/>
        <end position="900"/>
    </location>
</feature>
<feature type="strand" evidence="14">
    <location>
        <begin position="905"/>
        <end position="915"/>
    </location>
</feature>
<comment type="function">
    <text evidence="6">Neisseria acquires iron by extracting it from serum transferrin (TF) in its human host. Acts as a TF receptor and is required for TF utilization. Binds both apo- and holo-TF, via the TF C-terminus.</text>
</comment>
<comment type="subunit">
    <text evidence="6">Binds both human apo- and holo-transferrin (TF), via the TF C-terminus. Forms a large complex with TF and TbpB.</text>
</comment>
<comment type="interaction">
    <interactant intactId="EBI-15968954">
        <id>Q9K0U9</id>
    </interactant>
    <interactant intactId="EBI-714319">
        <id>P02787</id>
        <label>TF</label>
    </interactant>
    <organismsDiffer>true</organismsDiffer>
    <experiments>4</experiments>
</comment>
<comment type="subcellular location">
    <subcellularLocation>
        <location evidence="2 10">Cell outer membrane</location>
        <topology evidence="2 10">Multi-pass membrane protein</topology>
    </subcellularLocation>
</comment>
<comment type="domain">
    <text evidence="6">The N-terminal periplasmic domain encodes a plug that inserts into the 22 beta-strand barrel, the extracellular loops extend up to 60 Angstroms away from the outer membrane. Part of the plug (the plug loop, resides 121-139) interacts with transferrin (TF), as does the L3 helix finger in extracellular loop 3 (residues 351-361). When the L3 helix finger inserts into TF it disturbs the conformation of TF and its coordination of iron 2. Electron microscopy suggests that in the TbpA-TbpB-TF complex, TF is captured directly above the loop domain of TbpA in a chamber of about 1000 Angstroms(3) formed by the 3 proteins, where interactions between the proteins serve to abstract iron 2 from TF.</text>
</comment>
<comment type="miscellaneous">
    <text evidence="4">Present in outer membrane vesicle formulations which are used as vaccines in human.</text>
</comment>
<comment type="miscellaneous">
    <text evidence="5">N.meningitidis cells will only bind to human TF, not bovine or porcine TF, explaining at least in part the bacteria's inability to cause infection in non-human hosts.</text>
</comment>
<comment type="similarity">
    <text evidence="9">Belongs to the TonB-dependent receptor family.</text>
</comment>
<organism>
    <name type="scientific">Neisseria meningitidis serogroup B (strain ATCC BAA-335 / MC58)</name>
    <dbReference type="NCBI Taxonomy" id="122586"/>
    <lineage>
        <taxon>Bacteria</taxon>
        <taxon>Pseudomonadati</taxon>
        <taxon>Pseudomonadota</taxon>
        <taxon>Betaproteobacteria</taxon>
        <taxon>Neisseriales</taxon>
        <taxon>Neisseriaceae</taxon>
        <taxon>Neisseria</taxon>
    </lineage>
</organism>
<gene>
    <name evidence="7" type="primary">tbp1</name>
    <name evidence="8" type="synonym">tbpA</name>
    <name type="ordered locus">NMB0461</name>
</gene>
<name>TBPA_NEIMB</name>
<keyword id="KW-0002">3D-structure</keyword>
<keyword id="KW-0998">Cell outer membrane</keyword>
<keyword id="KW-0472">Membrane</keyword>
<keyword id="KW-0675">Receptor</keyword>
<keyword id="KW-1185">Reference proteome</keyword>
<keyword id="KW-0732">Signal</keyword>
<keyword id="KW-0798">TonB box</keyword>
<keyword id="KW-0812">Transmembrane</keyword>
<keyword id="KW-1134">Transmembrane beta strand</keyword>
<keyword id="KW-0813">Transport</keyword>
<keyword id="KW-0843">Virulence</keyword>
<dbReference type="EMBL" id="AE002098">
    <property type="protein sequence ID" value="AAF40898.1"/>
    <property type="molecule type" value="Genomic_DNA"/>
</dbReference>
<dbReference type="PIR" id="F81196">
    <property type="entry name" value="F81196"/>
</dbReference>
<dbReference type="RefSeq" id="NP_273508.1">
    <property type="nucleotide sequence ID" value="NC_003112.2"/>
</dbReference>
<dbReference type="RefSeq" id="WP_010980797.1">
    <property type="nucleotide sequence ID" value="NC_003112.2"/>
</dbReference>
<dbReference type="PDB" id="3V89">
    <property type="method" value="X-ray"/>
    <property type="resolution" value="3.10 A"/>
    <property type="chains" value="A=25-915"/>
</dbReference>
<dbReference type="PDB" id="3V8X">
    <property type="method" value="X-ray"/>
    <property type="resolution" value="2.60 A"/>
    <property type="chains" value="A=25-915"/>
</dbReference>
<dbReference type="PDBsum" id="3V89"/>
<dbReference type="PDBsum" id="3V8X"/>
<dbReference type="SMR" id="Q9K0U9"/>
<dbReference type="DIP" id="DIP-59653N"/>
<dbReference type="IntAct" id="Q9K0U9">
    <property type="interactions" value="2"/>
</dbReference>
<dbReference type="STRING" id="122586.NMB0461"/>
<dbReference type="PaxDb" id="122586-NMB0461"/>
<dbReference type="KEGG" id="nme:NMB0461"/>
<dbReference type="PATRIC" id="fig|122586.8.peg.601"/>
<dbReference type="HOGENOM" id="CLU_008287_19_0_4"/>
<dbReference type="InParanoid" id="Q9K0U9"/>
<dbReference type="OrthoDB" id="9764669at2"/>
<dbReference type="EvolutionaryTrace" id="Q9K0U9"/>
<dbReference type="Proteomes" id="UP000000425">
    <property type="component" value="Chromosome"/>
</dbReference>
<dbReference type="GO" id="GO:0009279">
    <property type="term" value="C:cell outer membrane"/>
    <property type="evidence" value="ECO:0000318"/>
    <property type="project" value="GO_Central"/>
</dbReference>
<dbReference type="GO" id="GO:0015091">
    <property type="term" value="F:ferric iron transmembrane transporter activity"/>
    <property type="evidence" value="ECO:0007669"/>
    <property type="project" value="InterPro"/>
</dbReference>
<dbReference type="GO" id="GO:0015344">
    <property type="term" value="F:siderophore uptake transmembrane transporter activity"/>
    <property type="evidence" value="ECO:0000318"/>
    <property type="project" value="GO_Central"/>
</dbReference>
<dbReference type="GO" id="GO:0044718">
    <property type="term" value="P:siderophore transmembrane transport"/>
    <property type="evidence" value="ECO:0000318"/>
    <property type="project" value="GO_Central"/>
</dbReference>
<dbReference type="CDD" id="cd01347">
    <property type="entry name" value="ligand_gated_channel"/>
    <property type="match status" value="1"/>
</dbReference>
<dbReference type="Gene3D" id="2.40.170.20">
    <property type="entry name" value="TonB-dependent receptor, beta-barrel domain"/>
    <property type="match status" value="1"/>
</dbReference>
<dbReference type="Gene3D" id="2.170.130.10">
    <property type="entry name" value="TonB-dependent receptor, plug domain"/>
    <property type="match status" value="1"/>
</dbReference>
<dbReference type="InterPro" id="IPR012910">
    <property type="entry name" value="Plug_dom"/>
</dbReference>
<dbReference type="InterPro" id="IPR037066">
    <property type="entry name" value="Plug_dom_sf"/>
</dbReference>
<dbReference type="InterPro" id="IPR039426">
    <property type="entry name" value="TonB-dep_rcpt-like"/>
</dbReference>
<dbReference type="InterPro" id="IPR000531">
    <property type="entry name" value="TonB-dep_rcpt_b-brl"/>
</dbReference>
<dbReference type="InterPro" id="IPR010916">
    <property type="entry name" value="TonB_box_CS"/>
</dbReference>
<dbReference type="InterPro" id="IPR010949">
    <property type="entry name" value="TonB_Hb/transfer/lactofer_rcpt"/>
</dbReference>
<dbReference type="InterPro" id="IPR010948">
    <property type="entry name" value="TonB_lacto/transferrin_rcpt"/>
</dbReference>
<dbReference type="InterPro" id="IPR036942">
    <property type="entry name" value="TonB_rcpt_b-brl_sf"/>
</dbReference>
<dbReference type="InterPro" id="IPR010917">
    <property type="entry name" value="TonB_rcpt_CS"/>
</dbReference>
<dbReference type="NCBIfam" id="TIGR01786">
    <property type="entry name" value="TonB-hemlactrns"/>
    <property type="match status" value="1"/>
</dbReference>
<dbReference type="NCBIfam" id="TIGR01776">
    <property type="entry name" value="TonB-tbp-lbp"/>
    <property type="match status" value="1"/>
</dbReference>
<dbReference type="PANTHER" id="PTHR30069">
    <property type="entry name" value="TONB-DEPENDENT OUTER MEMBRANE RECEPTOR"/>
    <property type="match status" value="1"/>
</dbReference>
<dbReference type="PANTHER" id="PTHR30069:SF54">
    <property type="entry name" value="TRANSFERRIN-BINDING PROTEIN A"/>
    <property type="match status" value="1"/>
</dbReference>
<dbReference type="Pfam" id="PF07715">
    <property type="entry name" value="Plug"/>
    <property type="match status" value="1"/>
</dbReference>
<dbReference type="Pfam" id="PF00593">
    <property type="entry name" value="TonB_dep_Rec_b-barrel"/>
    <property type="match status" value="1"/>
</dbReference>
<dbReference type="SUPFAM" id="SSF56935">
    <property type="entry name" value="Porins"/>
    <property type="match status" value="1"/>
</dbReference>
<dbReference type="PROSITE" id="PS00430">
    <property type="entry name" value="TONB_DEPENDENT_REC_1"/>
    <property type="match status" value="1"/>
</dbReference>
<dbReference type="PROSITE" id="PS01156">
    <property type="entry name" value="TONB_DEPENDENT_REC_2"/>
    <property type="match status" value="1"/>
</dbReference>
<dbReference type="PROSITE" id="PS52016">
    <property type="entry name" value="TONB_DEPENDENT_REC_3"/>
    <property type="match status" value="1"/>
</dbReference>
<sequence>MQQQHLFRFNILCLSLMTALPAYAENVQAGQAQEKQLDTIQVKAKKQKTRRDNEVTGLGKLVKSSDTLSKEQVLNIRDLTRYDPGIAVVEQGRGASSGYSIRGMDKNRVSLTVDGVSQIQSYTAQAALGGTRTAGSSGAINEIEYENVKAVEISKGSNSVEQGSGALAGSVAFQTKTADDVIGEGRQWGIQSKTAYSGKNRGLTQSIALAGRIGGAEALLIHTGRRAGEIRAHEDAGRGVQSFNRLVPVEDSSNYAYFIVKEECKNGSYETCKANPKKDVVGKDERQTVSTRDYTGPNRFLADPLSYESRSWLFRPGFRFENKRHYIGGILEHTQQTFDTRDMTVPAFLTKAVFDANKKQAGSLPGNGKYAGNHKYGGLFTNGENGALVGAEYGTGVFYDETHTKSRYGLEYVYTNADKDTWADYARLSYDRQGIGLDNHFQQTHCSADGSDKYCRPSADKPFSYYKSDRVIYGESHRLLQAAFKKSFDTAKIRHNLSVNLGFDRFGSNLRHQDYYYQHANRAYSSNTPPQNNGKKISPNGSETSPYWVTIGRGNVVTGQICRLGNNTYTDCTPRSINGKSYYAAVRDNVRLGRWADVGAGLRYDYRSTHSDDGSVSTGTHRTLSWNAGIVLKPTDWLDLTYRTSTGFRLPSFAEMYGWRAGVQSKAVKIDPEKSFNKEAGIVFKGDFGNLEASWFNNAYRDLIVRGYEAQIKDGKEEAKGDPAYLNAQSARITGINILGKIDWNGVWDKLPEGWYSTFAYNRVRVRDIKKRADRTDIQSHLFDAIQPSRYVVGLGYDQPEGKWGVNGMLTYSKAKEITELLGSRALLNGNSRNTKATARRTRPWYIVDVSGYYTVKKHFTLRAGVYNLLNYRYVTWENVRQTAGGAVNQHKNVGVYNRYAAPGRNYTFSLEMKF</sequence>
<proteinExistence type="evidence at protein level"/>
<reference key="1">
    <citation type="journal article" date="2000" name="Science">
        <title>Complete genome sequence of Neisseria meningitidis serogroup B strain MC58.</title>
        <authorList>
            <person name="Tettelin H."/>
            <person name="Saunders N.J."/>
            <person name="Heidelberg J.F."/>
            <person name="Jeffries A.C."/>
            <person name="Nelson K.E."/>
            <person name="Eisen J.A."/>
            <person name="Ketchum K.A."/>
            <person name="Hood D.W."/>
            <person name="Peden J.F."/>
            <person name="Dodson R.J."/>
            <person name="Nelson W.C."/>
            <person name="Gwinn M.L."/>
            <person name="DeBoy R.T."/>
            <person name="Peterson J.D."/>
            <person name="Hickey E.K."/>
            <person name="Haft D.H."/>
            <person name="Salzberg S.L."/>
            <person name="White O."/>
            <person name="Fleischmann R.D."/>
            <person name="Dougherty B.A."/>
            <person name="Mason T.M."/>
            <person name="Ciecko A."/>
            <person name="Parksey D.S."/>
            <person name="Blair E."/>
            <person name="Cittone H."/>
            <person name="Clark E.B."/>
            <person name="Cotton M.D."/>
            <person name="Utterback T.R."/>
            <person name="Khouri H.M."/>
            <person name="Qin H."/>
            <person name="Vamathevan J.J."/>
            <person name="Gill J."/>
            <person name="Scarlato V."/>
            <person name="Masignani V."/>
            <person name="Pizza M."/>
            <person name="Grandi G."/>
            <person name="Sun L."/>
            <person name="Smith H.O."/>
            <person name="Fraser C.M."/>
            <person name="Moxon E.R."/>
            <person name="Rappuoli R."/>
            <person name="Venter J.C."/>
        </authorList>
    </citation>
    <scope>NUCLEOTIDE SEQUENCE [LARGE SCALE GENOMIC DNA]</scope>
    <source>
        <strain>ATCC BAA-335 / MC58</strain>
    </source>
</reference>
<reference key="2">
    <citation type="journal article" date="1990" name="Can. J. Microbiol.">
        <title>Receptors for transferrin in pathogenic bacteria are specific for the host's protein.</title>
        <authorList>
            <person name="Schryvers A.B."/>
            <person name="Gonzalez G.C."/>
        </authorList>
    </citation>
    <scope>HOST-SPECIFICITY</scope>
</reference>
<reference key="3">
    <citation type="journal article" date="2006" name="Proteomics">
        <title>Proteomic analysis of a meningococcal outer membrane vesicle vaccine prepared from the group B strain NZ98/254.</title>
        <authorList>
            <person name="Vipond C."/>
            <person name="Suker J."/>
            <person name="Jones C."/>
            <person name="Tang C."/>
            <person name="Feavers I.M."/>
            <person name="Wheeler J.X."/>
        </authorList>
    </citation>
    <scope>IDENTIFICATION BY MASS SPECTROMETRY [LARGE SCALE ANALYSIS]</scope>
    <source>
        <strain>NZ98/254 / Serogroup B</strain>
    </source>
</reference>
<reference evidence="11 12" key="4">
    <citation type="journal article" date="2012" name="Nature">
        <title>Structural basis for iron piracy by pathogenic Neisseria.</title>
        <authorList>
            <person name="Noinaj N."/>
            <person name="Easley N.C."/>
            <person name="Oke M."/>
            <person name="Mizuno N."/>
            <person name="Gumbart J."/>
            <person name="Boura E."/>
            <person name="Steere A.N."/>
            <person name="Zak O."/>
            <person name="Aisen P."/>
            <person name="Tajkhorshid E."/>
            <person name="Evans R.W."/>
            <person name="Gorringe A.R."/>
            <person name="Mason A.B."/>
            <person name="Steven A.C."/>
            <person name="Buchanan S.K."/>
        </authorList>
    </citation>
    <scope>X-RAY CRYSTALLOGRAPHY (2.60 ANGSTROMS) OF 25-915 IN COMPLEX WITH HUMAN TRANSFERRIN</scope>
    <scope>FUNCTION</scope>
    <scope>TRANSFERRIN-BINDING</scope>
    <scope>SUBUNIT</scope>
    <scope>DOMAIN</scope>
    <scope>TOPOLOGY</scope>
    <scope>MUTAGENESIS OF ASP-251; 351-LYS--ALA-361; LYS-358; LYS-467; ASP-722 AND ARG-825</scope>
    <source>
        <strain>K454 / Serogroup B</strain>
    </source>
</reference>
<evidence type="ECO:0000250" key="1"/>
<evidence type="ECO:0000255" key="2">
    <source>
        <dbReference type="PROSITE-ProRule" id="PRU01360"/>
    </source>
</evidence>
<evidence type="ECO:0000256" key="3">
    <source>
        <dbReference type="SAM" id="MobiDB-lite"/>
    </source>
</evidence>
<evidence type="ECO:0000269" key="4">
    <source>
    </source>
</evidence>
<evidence type="ECO:0000269" key="5">
    <source>
    </source>
</evidence>
<evidence type="ECO:0000269" key="6">
    <source>
    </source>
</evidence>
<evidence type="ECO:0000303" key="7">
    <source>
    </source>
</evidence>
<evidence type="ECO:0000303" key="8">
    <source>
    </source>
</evidence>
<evidence type="ECO:0000305" key="9"/>
<evidence type="ECO:0000305" key="10">
    <source>
    </source>
</evidence>
<evidence type="ECO:0007744" key="11">
    <source>
        <dbReference type="PDB" id="3V89"/>
    </source>
</evidence>
<evidence type="ECO:0007744" key="12">
    <source>
        <dbReference type="PDB" id="3V8X"/>
    </source>
</evidence>
<evidence type="ECO:0007829" key="13">
    <source>
        <dbReference type="PDB" id="3V89"/>
    </source>
</evidence>
<evidence type="ECO:0007829" key="14">
    <source>
        <dbReference type="PDB" id="3V8X"/>
    </source>
</evidence>
<protein>
    <recommendedName>
        <fullName evidence="8">Transferrin-binding protein A</fullName>
        <shortName evidence="8">TbpA</shortName>
    </recommendedName>
    <alternativeName>
        <fullName evidence="7">Transferrin-binding protein 1</fullName>
    </alternativeName>
</protein>